<gene>
    <name evidence="1" type="primary">rplU</name>
    <name type="ordered locus">CBUD_1683</name>
</gene>
<feature type="chain" id="PRO_1000086977" description="Large ribosomal subunit protein bL21">
    <location>
        <begin position="1"/>
        <end position="115"/>
    </location>
</feature>
<accession>A9KEJ9</accession>
<comment type="function">
    <text evidence="1">This protein binds to 23S rRNA in the presence of protein L20.</text>
</comment>
<comment type="subunit">
    <text evidence="1">Part of the 50S ribosomal subunit. Contacts protein L20.</text>
</comment>
<comment type="similarity">
    <text evidence="1">Belongs to the bacterial ribosomal protein bL21 family.</text>
</comment>
<dbReference type="EMBL" id="CP000733">
    <property type="protein sequence ID" value="ABS77706.1"/>
    <property type="molecule type" value="Genomic_DNA"/>
</dbReference>
<dbReference type="RefSeq" id="WP_011997215.1">
    <property type="nucleotide sequence ID" value="NC_009727.1"/>
</dbReference>
<dbReference type="SMR" id="A9KEJ9"/>
<dbReference type="KEGG" id="cbd:CBUD_1683"/>
<dbReference type="HOGENOM" id="CLU_061463_3_2_6"/>
<dbReference type="Proteomes" id="UP000008555">
    <property type="component" value="Chromosome"/>
</dbReference>
<dbReference type="GO" id="GO:0005737">
    <property type="term" value="C:cytoplasm"/>
    <property type="evidence" value="ECO:0007669"/>
    <property type="project" value="UniProtKB-ARBA"/>
</dbReference>
<dbReference type="GO" id="GO:1990904">
    <property type="term" value="C:ribonucleoprotein complex"/>
    <property type="evidence" value="ECO:0007669"/>
    <property type="project" value="UniProtKB-KW"/>
</dbReference>
<dbReference type="GO" id="GO:0005840">
    <property type="term" value="C:ribosome"/>
    <property type="evidence" value="ECO:0007669"/>
    <property type="project" value="UniProtKB-KW"/>
</dbReference>
<dbReference type="GO" id="GO:0019843">
    <property type="term" value="F:rRNA binding"/>
    <property type="evidence" value="ECO:0007669"/>
    <property type="project" value="UniProtKB-UniRule"/>
</dbReference>
<dbReference type="GO" id="GO:0003735">
    <property type="term" value="F:structural constituent of ribosome"/>
    <property type="evidence" value="ECO:0007669"/>
    <property type="project" value="InterPro"/>
</dbReference>
<dbReference type="GO" id="GO:0006412">
    <property type="term" value="P:translation"/>
    <property type="evidence" value="ECO:0007669"/>
    <property type="project" value="UniProtKB-UniRule"/>
</dbReference>
<dbReference type="HAMAP" id="MF_01363">
    <property type="entry name" value="Ribosomal_bL21"/>
    <property type="match status" value="1"/>
</dbReference>
<dbReference type="InterPro" id="IPR028909">
    <property type="entry name" value="bL21-like"/>
</dbReference>
<dbReference type="InterPro" id="IPR036164">
    <property type="entry name" value="bL21-like_sf"/>
</dbReference>
<dbReference type="InterPro" id="IPR001787">
    <property type="entry name" value="Ribosomal_bL21"/>
</dbReference>
<dbReference type="InterPro" id="IPR018258">
    <property type="entry name" value="Ribosomal_bL21_CS"/>
</dbReference>
<dbReference type="NCBIfam" id="TIGR00061">
    <property type="entry name" value="L21"/>
    <property type="match status" value="1"/>
</dbReference>
<dbReference type="PANTHER" id="PTHR21349">
    <property type="entry name" value="50S RIBOSOMAL PROTEIN L21"/>
    <property type="match status" value="1"/>
</dbReference>
<dbReference type="PANTHER" id="PTHR21349:SF0">
    <property type="entry name" value="LARGE RIBOSOMAL SUBUNIT PROTEIN BL21M"/>
    <property type="match status" value="1"/>
</dbReference>
<dbReference type="Pfam" id="PF00829">
    <property type="entry name" value="Ribosomal_L21p"/>
    <property type="match status" value="1"/>
</dbReference>
<dbReference type="SUPFAM" id="SSF141091">
    <property type="entry name" value="L21p-like"/>
    <property type="match status" value="1"/>
</dbReference>
<dbReference type="PROSITE" id="PS01169">
    <property type="entry name" value="RIBOSOMAL_L21"/>
    <property type="match status" value="1"/>
</dbReference>
<organism>
    <name type="scientific">Coxiella burnetii (strain Dugway 5J108-111)</name>
    <dbReference type="NCBI Taxonomy" id="434922"/>
    <lineage>
        <taxon>Bacteria</taxon>
        <taxon>Pseudomonadati</taxon>
        <taxon>Pseudomonadota</taxon>
        <taxon>Gammaproteobacteria</taxon>
        <taxon>Legionellales</taxon>
        <taxon>Coxiellaceae</taxon>
        <taxon>Coxiella</taxon>
    </lineage>
</organism>
<evidence type="ECO:0000255" key="1">
    <source>
        <dbReference type="HAMAP-Rule" id="MF_01363"/>
    </source>
</evidence>
<evidence type="ECO:0000305" key="2"/>
<sequence>MYAIIKTGGKQYRVTEGQMLKVEKLAQDVGQSVKFDDVLMVAAGDELHIGTPSVKDAAVTAEVVDQGRQAKIEIIKFKRRKHHMKRQGHRQDFTAVKVTEIALGKAKKEVKTDGA</sequence>
<keyword id="KW-0687">Ribonucleoprotein</keyword>
<keyword id="KW-0689">Ribosomal protein</keyword>
<keyword id="KW-0694">RNA-binding</keyword>
<keyword id="KW-0699">rRNA-binding</keyword>
<protein>
    <recommendedName>
        <fullName evidence="1">Large ribosomal subunit protein bL21</fullName>
    </recommendedName>
    <alternativeName>
        <fullName evidence="2">50S ribosomal protein L21</fullName>
    </alternativeName>
</protein>
<name>RL21_COXBN</name>
<proteinExistence type="inferred from homology"/>
<reference key="1">
    <citation type="journal article" date="2009" name="Infect. Immun.">
        <title>Comparative genomics reveal extensive transposon-mediated genomic plasticity and diversity among potential effector proteins within the genus Coxiella.</title>
        <authorList>
            <person name="Beare P.A."/>
            <person name="Unsworth N."/>
            <person name="Andoh M."/>
            <person name="Voth D.E."/>
            <person name="Omsland A."/>
            <person name="Gilk S.D."/>
            <person name="Williams K.P."/>
            <person name="Sobral B.W."/>
            <person name="Kupko J.J. III"/>
            <person name="Porcella S.F."/>
            <person name="Samuel J.E."/>
            <person name="Heinzen R.A."/>
        </authorList>
    </citation>
    <scope>NUCLEOTIDE SEQUENCE [LARGE SCALE GENOMIC DNA]</scope>
    <source>
        <strain>Dugway 5J108-111</strain>
    </source>
</reference>